<proteinExistence type="evidence at protein level"/>
<gene>
    <name evidence="1" type="primary">rpsG</name>
    <name type="ordered locus">llmg_2557</name>
</gene>
<accession>A2RP73</accession>
<keyword id="KW-0002">3D-structure</keyword>
<keyword id="KW-0687">Ribonucleoprotein</keyword>
<keyword id="KW-0689">Ribosomal protein</keyword>
<keyword id="KW-0694">RNA-binding</keyword>
<keyword id="KW-0699">rRNA-binding</keyword>
<keyword id="KW-0820">tRNA-binding</keyword>
<reference key="1">
    <citation type="journal article" date="2007" name="J. Bacteriol.">
        <title>The complete genome sequence of the lactic acid bacterial paradigm Lactococcus lactis subsp. cremoris MG1363.</title>
        <authorList>
            <person name="Wegmann U."/>
            <person name="O'Connell-Motherway M."/>
            <person name="Zomer A."/>
            <person name="Buist G."/>
            <person name="Shearman C."/>
            <person name="Canchaya C."/>
            <person name="Ventura M."/>
            <person name="Goesmann A."/>
            <person name="Gasson M.J."/>
            <person name="Kuipers O.P."/>
            <person name="van Sinderen D."/>
            <person name="Kok J."/>
        </authorList>
    </citation>
    <scope>NUCLEOTIDE SEQUENCE [LARGE SCALE GENOMIC DNA]</scope>
    <source>
        <strain>MG1363</strain>
    </source>
</reference>
<protein>
    <recommendedName>
        <fullName evidence="1">Small ribosomal subunit protein uS7</fullName>
    </recommendedName>
    <alternativeName>
        <fullName evidence="2">30S ribosomal protein S7</fullName>
    </alternativeName>
</protein>
<name>RS7_LACLM</name>
<dbReference type="EMBL" id="AM406671">
    <property type="protein sequence ID" value="CAL99119.1"/>
    <property type="molecule type" value="Genomic_DNA"/>
</dbReference>
<dbReference type="RefSeq" id="WP_003129876.1">
    <property type="nucleotide sequence ID" value="NZ_WJVF01000037.1"/>
</dbReference>
<dbReference type="PDB" id="5MYJ">
    <property type="method" value="EM"/>
    <property type="resolution" value="5.60 A"/>
    <property type="chains" value="AG=1-155"/>
</dbReference>
<dbReference type="PDBsum" id="5MYJ"/>
<dbReference type="EMDB" id="EMD-3581"/>
<dbReference type="SMR" id="A2RP73"/>
<dbReference type="STRING" id="416870.llmg_2557"/>
<dbReference type="GeneID" id="89634663"/>
<dbReference type="KEGG" id="llm:llmg_2557"/>
<dbReference type="eggNOG" id="COG0049">
    <property type="taxonomic scope" value="Bacteria"/>
</dbReference>
<dbReference type="HOGENOM" id="CLU_072226_1_1_9"/>
<dbReference type="OrthoDB" id="9807653at2"/>
<dbReference type="PhylomeDB" id="A2RP73"/>
<dbReference type="Proteomes" id="UP000000364">
    <property type="component" value="Chromosome"/>
</dbReference>
<dbReference type="GO" id="GO:0015935">
    <property type="term" value="C:small ribosomal subunit"/>
    <property type="evidence" value="ECO:0007669"/>
    <property type="project" value="InterPro"/>
</dbReference>
<dbReference type="GO" id="GO:0019843">
    <property type="term" value="F:rRNA binding"/>
    <property type="evidence" value="ECO:0007669"/>
    <property type="project" value="UniProtKB-UniRule"/>
</dbReference>
<dbReference type="GO" id="GO:0003735">
    <property type="term" value="F:structural constituent of ribosome"/>
    <property type="evidence" value="ECO:0007669"/>
    <property type="project" value="InterPro"/>
</dbReference>
<dbReference type="GO" id="GO:0000049">
    <property type="term" value="F:tRNA binding"/>
    <property type="evidence" value="ECO:0007669"/>
    <property type="project" value="UniProtKB-UniRule"/>
</dbReference>
<dbReference type="GO" id="GO:0006412">
    <property type="term" value="P:translation"/>
    <property type="evidence" value="ECO:0007669"/>
    <property type="project" value="UniProtKB-UniRule"/>
</dbReference>
<dbReference type="CDD" id="cd14869">
    <property type="entry name" value="uS7_Bacteria"/>
    <property type="match status" value="1"/>
</dbReference>
<dbReference type="FunFam" id="1.10.455.10:FF:000001">
    <property type="entry name" value="30S ribosomal protein S7"/>
    <property type="match status" value="1"/>
</dbReference>
<dbReference type="Gene3D" id="1.10.455.10">
    <property type="entry name" value="Ribosomal protein S7 domain"/>
    <property type="match status" value="1"/>
</dbReference>
<dbReference type="HAMAP" id="MF_00480_B">
    <property type="entry name" value="Ribosomal_uS7_B"/>
    <property type="match status" value="1"/>
</dbReference>
<dbReference type="InterPro" id="IPR000235">
    <property type="entry name" value="Ribosomal_uS7"/>
</dbReference>
<dbReference type="InterPro" id="IPR005717">
    <property type="entry name" value="Ribosomal_uS7_bac/org-type"/>
</dbReference>
<dbReference type="InterPro" id="IPR020606">
    <property type="entry name" value="Ribosomal_uS7_CS"/>
</dbReference>
<dbReference type="InterPro" id="IPR023798">
    <property type="entry name" value="Ribosomal_uS7_dom"/>
</dbReference>
<dbReference type="InterPro" id="IPR036823">
    <property type="entry name" value="Ribosomal_uS7_dom_sf"/>
</dbReference>
<dbReference type="NCBIfam" id="TIGR01029">
    <property type="entry name" value="rpsG_bact"/>
    <property type="match status" value="1"/>
</dbReference>
<dbReference type="PANTHER" id="PTHR11205">
    <property type="entry name" value="RIBOSOMAL PROTEIN S7"/>
    <property type="match status" value="1"/>
</dbReference>
<dbReference type="Pfam" id="PF00177">
    <property type="entry name" value="Ribosomal_S7"/>
    <property type="match status" value="1"/>
</dbReference>
<dbReference type="PIRSF" id="PIRSF002122">
    <property type="entry name" value="RPS7p_RPS7a_RPS5e_RPS7o"/>
    <property type="match status" value="1"/>
</dbReference>
<dbReference type="SUPFAM" id="SSF47973">
    <property type="entry name" value="Ribosomal protein S7"/>
    <property type="match status" value="1"/>
</dbReference>
<dbReference type="PROSITE" id="PS00052">
    <property type="entry name" value="RIBOSOMAL_S7"/>
    <property type="match status" value="1"/>
</dbReference>
<comment type="function">
    <text evidence="1">One of the primary rRNA binding proteins, it binds directly to 16S rRNA where it nucleates assembly of the head domain of the 30S subunit. Is located at the subunit interface close to the decoding center, probably blocks exit of the E-site tRNA.</text>
</comment>
<comment type="subunit">
    <text evidence="1">Part of the 30S ribosomal subunit. Contacts proteins S9 and S11.</text>
</comment>
<comment type="similarity">
    <text evidence="1">Belongs to the universal ribosomal protein uS7 family.</text>
</comment>
<feature type="chain" id="PRO_0000344297" description="Small ribosomal subunit protein uS7">
    <location>
        <begin position="1"/>
        <end position="155"/>
    </location>
</feature>
<organism>
    <name type="scientific">Lactococcus lactis subsp. cremoris (strain MG1363)</name>
    <dbReference type="NCBI Taxonomy" id="416870"/>
    <lineage>
        <taxon>Bacteria</taxon>
        <taxon>Bacillati</taxon>
        <taxon>Bacillota</taxon>
        <taxon>Bacilli</taxon>
        <taxon>Lactobacillales</taxon>
        <taxon>Streptococcaceae</taxon>
        <taxon>Lactococcus</taxon>
        <taxon>Lactococcus cremoris subsp. cremoris</taxon>
    </lineage>
</organism>
<sequence>MRKNRAPKREVLADPMYNSIVVTRLINRVMLDGKRGVAAQIVYGAFKQIEEATGNNPLEVFETAMENIMPVLEVRARRVGGSNYQVPVEVRPERRTTLGLRWLVTIARNRGEHTMQDRLAKEILDAANNTGAAVKKREDTHKMAEANRAFAHFRW</sequence>
<evidence type="ECO:0000255" key="1">
    <source>
        <dbReference type="HAMAP-Rule" id="MF_00480"/>
    </source>
</evidence>
<evidence type="ECO:0000305" key="2"/>